<gene>
    <name evidence="1" type="primary">proA</name>
    <name type="ordered locus">SPD_0823</name>
</gene>
<organism>
    <name type="scientific">Streptococcus pneumoniae serotype 2 (strain D39 / NCTC 7466)</name>
    <dbReference type="NCBI Taxonomy" id="373153"/>
    <lineage>
        <taxon>Bacteria</taxon>
        <taxon>Bacillati</taxon>
        <taxon>Bacillota</taxon>
        <taxon>Bacilli</taxon>
        <taxon>Lactobacillales</taxon>
        <taxon>Streptococcaceae</taxon>
        <taxon>Streptococcus</taxon>
    </lineage>
</organism>
<keyword id="KW-0028">Amino-acid biosynthesis</keyword>
<keyword id="KW-0963">Cytoplasm</keyword>
<keyword id="KW-0521">NADP</keyword>
<keyword id="KW-0560">Oxidoreductase</keyword>
<keyword id="KW-0641">Proline biosynthesis</keyword>
<keyword id="KW-1185">Reference proteome</keyword>
<feature type="chain" id="PRO_1000049995" description="Gamma-glutamyl phosphate reductase">
    <location>
        <begin position="1"/>
        <end position="420"/>
    </location>
</feature>
<dbReference type="EC" id="1.2.1.41" evidence="1"/>
<dbReference type="EMBL" id="CP000410">
    <property type="protein sequence ID" value="ABJ54450.1"/>
    <property type="molecule type" value="Genomic_DNA"/>
</dbReference>
<dbReference type="RefSeq" id="WP_000254686.1">
    <property type="nucleotide sequence ID" value="NZ_JAMLJR010000004.1"/>
</dbReference>
<dbReference type="SMR" id="Q04KZ2"/>
<dbReference type="PaxDb" id="373153-SPD_0823"/>
<dbReference type="KEGG" id="spd:SPD_0823"/>
<dbReference type="eggNOG" id="COG0014">
    <property type="taxonomic scope" value="Bacteria"/>
</dbReference>
<dbReference type="HOGENOM" id="CLU_030231_0_0_9"/>
<dbReference type="BioCyc" id="SPNE373153:G1G6V-902-MONOMER"/>
<dbReference type="UniPathway" id="UPA00098">
    <property type="reaction ID" value="UER00360"/>
</dbReference>
<dbReference type="Proteomes" id="UP000001452">
    <property type="component" value="Chromosome"/>
</dbReference>
<dbReference type="GO" id="GO:0005737">
    <property type="term" value="C:cytoplasm"/>
    <property type="evidence" value="ECO:0007669"/>
    <property type="project" value="UniProtKB-SubCell"/>
</dbReference>
<dbReference type="GO" id="GO:0004350">
    <property type="term" value="F:glutamate-5-semialdehyde dehydrogenase activity"/>
    <property type="evidence" value="ECO:0007669"/>
    <property type="project" value="UniProtKB-UniRule"/>
</dbReference>
<dbReference type="GO" id="GO:0050661">
    <property type="term" value="F:NADP binding"/>
    <property type="evidence" value="ECO:0007669"/>
    <property type="project" value="InterPro"/>
</dbReference>
<dbReference type="GO" id="GO:0055129">
    <property type="term" value="P:L-proline biosynthetic process"/>
    <property type="evidence" value="ECO:0007669"/>
    <property type="project" value="UniProtKB-UniRule"/>
</dbReference>
<dbReference type="CDD" id="cd07079">
    <property type="entry name" value="ALDH_F18-19_ProA-GPR"/>
    <property type="match status" value="1"/>
</dbReference>
<dbReference type="FunFam" id="3.40.309.10:FF:000006">
    <property type="entry name" value="Gamma-glutamyl phosphate reductase"/>
    <property type="match status" value="1"/>
</dbReference>
<dbReference type="Gene3D" id="3.40.605.10">
    <property type="entry name" value="Aldehyde Dehydrogenase, Chain A, domain 1"/>
    <property type="match status" value="1"/>
</dbReference>
<dbReference type="Gene3D" id="3.40.309.10">
    <property type="entry name" value="Aldehyde Dehydrogenase, Chain A, domain 2"/>
    <property type="match status" value="1"/>
</dbReference>
<dbReference type="HAMAP" id="MF_00412">
    <property type="entry name" value="ProA"/>
    <property type="match status" value="1"/>
</dbReference>
<dbReference type="InterPro" id="IPR016161">
    <property type="entry name" value="Ald_DH/histidinol_DH"/>
</dbReference>
<dbReference type="InterPro" id="IPR016163">
    <property type="entry name" value="Ald_DH_C"/>
</dbReference>
<dbReference type="InterPro" id="IPR016162">
    <property type="entry name" value="Ald_DH_N"/>
</dbReference>
<dbReference type="InterPro" id="IPR015590">
    <property type="entry name" value="Aldehyde_DH_dom"/>
</dbReference>
<dbReference type="InterPro" id="IPR020593">
    <property type="entry name" value="G-glutamylP_reductase_CS"/>
</dbReference>
<dbReference type="InterPro" id="IPR012134">
    <property type="entry name" value="Glu-5-SA_DH"/>
</dbReference>
<dbReference type="InterPro" id="IPR000965">
    <property type="entry name" value="GPR_dom"/>
</dbReference>
<dbReference type="NCBIfam" id="NF001221">
    <property type="entry name" value="PRK00197.1"/>
    <property type="match status" value="1"/>
</dbReference>
<dbReference type="NCBIfam" id="TIGR00407">
    <property type="entry name" value="proA"/>
    <property type="match status" value="1"/>
</dbReference>
<dbReference type="PANTHER" id="PTHR11063:SF8">
    <property type="entry name" value="DELTA-1-PYRROLINE-5-CARBOXYLATE SYNTHASE"/>
    <property type="match status" value="1"/>
</dbReference>
<dbReference type="PANTHER" id="PTHR11063">
    <property type="entry name" value="GLUTAMATE SEMIALDEHYDE DEHYDROGENASE"/>
    <property type="match status" value="1"/>
</dbReference>
<dbReference type="Pfam" id="PF00171">
    <property type="entry name" value="Aldedh"/>
    <property type="match status" value="1"/>
</dbReference>
<dbReference type="PIRSF" id="PIRSF000151">
    <property type="entry name" value="GPR"/>
    <property type="match status" value="1"/>
</dbReference>
<dbReference type="SUPFAM" id="SSF53720">
    <property type="entry name" value="ALDH-like"/>
    <property type="match status" value="1"/>
</dbReference>
<dbReference type="PROSITE" id="PS01223">
    <property type="entry name" value="PROA"/>
    <property type="match status" value="1"/>
</dbReference>
<evidence type="ECO:0000255" key="1">
    <source>
        <dbReference type="HAMAP-Rule" id="MF_00412"/>
    </source>
</evidence>
<reference key="1">
    <citation type="journal article" date="2007" name="J. Bacteriol.">
        <title>Genome sequence of Avery's virulent serotype 2 strain D39 of Streptococcus pneumoniae and comparison with that of unencapsulated laboratory strain R6.</title>
        <authorList>
            <person name="Lanie J.A."/>
            <person name="Ng W.-L."/>
            <person name="Kazmierczak K.M."/>
            <person name="Andrzejewski T.M."/>
            <person name="Davidsen T.M."/>
            <person name="Wayne K.J."/>
            <person name="Tettelin H."/>
            <person name="Glass J.I."/>
            <person name="Winkler M.E."/>
        </authorList>
    </citation>
    <scope>NUCLEOTIDE SEQUENCE [LARGE SCALE GENOMIC DNA]</scope>
    <source>
        <strain>D39 / NCTC 7466</strain>
    </source>
</reference>
<comment type="function">
    <text evidence="1">Catalyzes the NADPH-dependent reduction of L-glutamate 5-phosphate into L-glutamate 5-semialdehyde and phosphate. The product spontaneously undergoes cyclization to form 1-pyrroline-5-carboxylate.</text>
</comment>
<comment type="catalytic activity">
    <reaction evidence="1">
        <text>L-glutamate 5-semialdehyde + phosphate + NADP(+) = L-glutamyl 5-phosphate + NADPH + H(+)</text>
        <dbReference type="Rhea" id="RHEA:19541"/>
        <dbReference type="ChEBI" id="CHEBI:15378"/>
        <dbReference type="ChEBI" id="CHEBI:43474"/>
        <dbReference type="ChEBI" id="CHEBI:57783"/>
        <dbReference type="ChEBI" id="CHEBI:58066"/>
        <dbReference type="ChEBI" id="CHEBI:58274"/>
        <dbReference type="ChEBI" id="CHEBI:58349"/>
        <dbReference type="EC" id="1.2.1.41"/>
    </reaction>
</comment>
<comment type="pathway">
    <text evidence="1">Amino-acid biosynthesis; L-proline biosynthesis; L-glutamate 5-semialdehyde from L-glutamate: step 2/2.</text>
</comment>
<comment type="subcellular location">
    <subcellularLocation>
        <location evidence="1">Cytoplasm</location>
    </subcellularLocation>
</comment>
<comment type="similarity">
    <text evidence="1">Belongs to the gamma-glutamyl phosphate reductase family.</text>
</comment>
<accession>Q04KZ2</accession>
<proteinExistence type="inferred from homology"/>
<sequence>MVSRQEQFEQVQAVKKSINTASEEVKNQALLAMADHLVAATEEILAANALDMAAAKGKISDVMLDRLYLDADRIEAMARGIREVVALPDPIGEVLETSQLENGLVITKKRVAMGVIGIIYESRPNVTSDAAALTLKSGNAVVLRSGKDAYQTTHAIVTALKKGLETTTIHPNVIQLVEDTSRESSYAMMKAKGYLDLLIPRGGAGLINAVVENAIVPVIETGTGIVHVYVDKDADEDKALSIINNAKTSRPSVCNAMEVLLVHENKAASILPRLDQMLVAERKEAGLEPIQFRLDSKASQFVSGQAAETQDFDTEFLDYVLAVKVVSSLEEAVAHIESHSTHHSDAIVTENAEAAAYFTDQVDSAAVYVNASTRFTDGGQFGLGCEMGISTQKLHARGPMGLKELTSYKYVVAGDGQIRE</sequence>
<name>PROA_STRP2</name>
<protein>
    <recommendedName>
        <fullName evidence="1">Gamma-glutamyl phosphate reductase</fullName>
        <shortName evidence="1">GPR</shortName>
        <ecNumber evidence="1">1.2.1.41</ecNumber>
    </recommendedName>
    <alternativeName>
        <fullName evidence="1">Glutamate-5-semialdehyde dehydrogenase</fullName>
    </alternativeName>
    <alternativeName>
        <fullName evidence="1">Glutamyl-gamma-semialdehyde dehydrogenase</fullName>
        <shortName evidence="1">GSA dehydrogenase</shortName>
    </alternativeName>
</protein>